<organism>
    <name type="scientific">Helicobacter pylori (strain G27)</name>
    <dbReference type="NCBI Taxonomy" id="563041"/>
    <lineage>
        <taxon>Bacteria</taxon>
        <taxon>Pseudomonadati</taxon>
        <taxon>Campylobacterota</taxon>
        <taxon>Epsilonproteobacteria</taxon>
        <taxon>Campylobacterales</taxon>
        <taxon>Helicobacteraceae</taxon>
        <taxon>Helicobacter</taxon>
    </lineage>
</organism>
<feature type="chain" id="PRO_1000142526" description="Large ribosomal subunit protein bL25">
    <location>
        <begin position="1"/>
        <end position="178"/>
    </location>
</feature>
<reference key="1">
    <citation type="journal article" date="2009" name="J. Bacteriol.">
        <title>The complete genome sequence of Helicobacter pylori strain G27.</title>
        <authorList>
            <person name="Baltrus D.A."/>
            <person name="Amieva M.R."/>
            <person name="Covacci A."/>
            <person name="Lowe T.M."/>
            <person name="Merrell D.S."/>
            <person name="Ottemann K.M."/>
            <person name="Stein M."/>
            <person name="Salama N.R."/>
            <person name="Guillemin K."/>
        </authorList>
    </citation>
    <scope>NUCLEOTIDE SEQUENCE [LARGE SCALE GENOMIC DNA]</scope>
    <source>
        <strain>G27</strain>
    </source>
</reference>
<protein>
    <recommendedName>
        <fullName evidence="1">Large ribosomal subunit protein bL25</fullName>
    </recommendedName>
    <alternativeName>
        <fullName evidence="2">50S ribosomal protein L25</fullName>
    </alternativeName>
    <alternativeName>
        <fullName evidence="1">General stress protein CTC</fullName>
    </alternativeName>
</protein>
<gene>
    <name evidence="1" type="primary">rplY</name>
    <name evidence="1" type="synonym">ctc</name>
    <name type="ordered locus">HPG27_1419</name>
</gene>
<sequence>MLEGVIRESITKANAKALKKDGYLIANVYGKGIENVNCAFKLNPFIKYLKEKKHLIFPVKLGDKTFEVVVQEYQKNPVTNELIHVDLLAVTKGVKSKFKVPVKHQGTPVGLKNKGILMLSKKRISVECAPEHLPDHYLVDVAPLDVNESILVRDLEKHENVKILDHDSIAVIGVIKAK</sequence>
<proteinExistence type="inferred from homology"/>
<comment type="function">
    <text evidence="1">This is one of the proteins that binds to the 5S RNA in the ribosome where it forms part of the central protuberance.</text>
</comment>
<comment type="subunit">
    <text evidence="1">Part of the 50S ribosomal subunit; part of the 5S rRNA/L5/L18/L25 subcomplex. Contacts the 5S rRNA. Binds to the 5S rRNA independently of L5 and L18.</text>
</comment>
<comment type="similarity">
    <text evidence="1">Belongs to the bacterial ribosomal protein bL25 family. CTC subfamily.</text>
</comment>
<accession>B5Z9B5</accession>
<name>RL25_HELPG</name>
<keyword id="KW-1185">Reference proteome</keyword>
<keyword id="KW-0687">Ribonucleoprotein</keyword>
<keyword id="KW-0689">Ribosomal protein</keyword>
<keyword id="KW-0694">RNA-binding</keyword>
<keyword id="KW-0699">rRNA-binding</keyword>
<dbReference type="EMBL" id="CP001173">
    <property type="protein sequence ID" value="ACI28164.1"/>
    <property type="molecule type" value="Genomic_DNA"/>
</dbReference>
<dbReference type="RefSeq" id="WP_000889318.1">
    <property type="nucleotide sequence ID" value="NC_011333.1"/>
</dbReference>
<dbReference type="SMR" id="B5Z9B5"/>
<dbReference type="KEGG" id="hpg:HPG27_1419"/>
<dbReference type="HOGENOM" id="CLU_075939_2_2_7"/>
<dbReference type="Proteomes" id="UP000001735">
    <property type="component" value="Chromosome"/>
</dbReference>
<dbReference type="GO" id="GO:0022625">
    <property type="term" value="C:cytosolic large ribosomal subunit"/>
    <property type="evidence" value="ECO:0007669"/>
    <property type="project" value="TreeGrafter"/>
</dbReference>
<dbReference type="GO" id="GO:0008097">
    <property type="term" value="F:5S rRNA binding"/>
    <property type="evidence" value="ECO:0007669"/>
    <property type="project" value="InterPro"/>
</dbReference>
<dbReference type="GO" id="GO:0003735">
    <property type="term" value="F:structural constituent of ribosome"/>
    <property type="evidence" value="ECO:0007669"/>
    <property type="project" value="InterPro"/>
</dbReference>
<dbReference type="GO" id="GO:0006412">
    <property type="term" value="P:translation"/>
    <property type="evidence" value="ECO:0007669"/>
    <property type="project" value="UniProtKB-UniRule"/>
</dbReference>
<dbReference type="CDD" id="cd00495">
    <property type="entry name" value="Ribosomal_L25_TL5_CTC"/>
    <property type="match status" value="1"/>
</dbReference>
<dbReference type="Gene3D" id="2.170.120.20">
    <property type="entry name" value="Ribosomal protein L25, beta domain"/>
    <property type="match status" value="1"/>
</dbReference>
<dbReference type="Gene3D" id="2.40.240.10">
    <property type="entry name" value="Ribosomal Protein L25, Chain P"/>
    <property type="match status" value="1"/>
</dbReference>
<dbReference type="HAMAP" id="MF_01334">
    <property type="entry name" value="Ribosomal_bL25_CTC"/>
    <property type="match status" value="1"/>
</dbReference>
<dbReference type="InterPro" id="IPR020056">
    <property type="entry name" value="Rbsml_bL25/Gln-tRNA_synth_N"/>
</dbReference>
<dbReference type="InterPro" id="IPR011035">
    <property type="entry name" value="Ribosomal_bL25/Gln-tRNA_synth"/>
</dbReference>
<dbReference type="InterPro" id="IPR020057">
    <property type="entry name" value="Ribosomal_bL25_b-dom"/>
</dbReference>
<dbReference type="InterPro" id="IPR037121">
    <property type="entry name" value="Ribosomal_bL25_C"/>
</dbReference>
<dbReference type="InterPro" id="IPR001021">
    <property type="entry name" value="Ribosomal_bL25_long"/>
</dbReference>
<dbReference type="InterPro" id="IPR029751">
    <property type="entry name" value="Ribosomal_L25_dom"/>
</dbReference>
<dbReference type="InterPro" id="IPR020930">
    <property type="entry name" value="Ribosomal_uL5_bac-type"/>
</dbReference>
<dbReference type="NCBIfam" id="TIGR00731">
    <property type="entry name" value="bL25_bact_ctc"/>
    <property type="match status" value="1"/>
</dbReference>
<dbReference type="NCBIfam" id="NF004129">
    <property type="entry name" value="PRK05618.1-4"/>
    <property type="match status" value="1"/>
</dbReference>
<dbReference type="PANTHER" id="PTHR33284">
    <property type="entry name" value="RIBOSOMAL PROTEIN L25/GLN-TRNA SYNTHETASE, ANTI-CODON-BINDING DOMAIN-CONTAINING PROTEIN"/>
    <property type="match status" value="1"/>
</dbReference>
<dbReference type="PANTHER" id="PTHR33284:SF1">
    <property type="entry name" value="RIBOSOMAL PROTEIN L25_GLN-TRNA SYNTHETASE, ANTI-CODON-BINDING DOMAIN-CONTAINING PROTEIN"/>
    <property type="match status" value="1"/>
</dbReference>
<dbReference type="Pfam" id="PF01386">
    <property type="entry name" value="Ribosomal_L25p"/>
    <property type="match status" value="1"/>
</dbReference>
<dbReference type="Pfam" id="PF14693">
    <property type="entry name" value="Ribosomal_TL5_C"/>
    <property type="match status" value="1"/>
</dbReference>
<dbReference type="SUPFAM" id="SSF50715">
    <property type="entry name" value="Ribosomal protein L25-like"/>
    <property type="match status" value="1"/>
</dbReference>
<evidence type="ECO:0000255" key="1">
    <source>
        <dbReference type="HAMAP-Rule" id="MF_01334"/>
    </source>
</evidence>
<evidence type="ECO:0000305" key="2"/>